<gene>
    <name evidence="1" type="primary">HCR1</name>
    <name type="ordered locus">CAGL0A04125g</name>
</gene>
<proteinExistence type="inferred from homology"/>
<accession>Q6FY89</accession>
<organism>
    <name type="scientific">Candida glabrata (strain ATCC 2001 / BCRC 20586 / JCM 3761 / NBRC 0622 / NRRL Y-65 / CBS 138)</name>
    <name type="common">Yeast</name>
    <name type="synonym">Nakaseomyces glabratus</name>
    <dbReference type="NCBI Taxonomy" id="284593"/>
    <lineage>
        <taxon>Eukaryota</taxon>
        <taxon>Fungi</taxon>
        <taxon>Dikarya</taxon>
        <taxon>Ascomycota</taxon>
        <taxon>Saccharomycotina</taxon>
        <taxon>Saccharomycetes</taxon>
        <taxon>Saccharomycetales</taxon>
        <taxon>Saccharomycetaceae</taxon>
        <taxon>Nakaseomyces</taxon>
    </lineage>
</organism>
<sequence>MSWDDAGNDDAVLMDSWDAEVDFAGDEPILDSWDEEPKAKKEAAKPKPKPKAGGKKNAKGEEKKEQVLAIDELDPQTRKELMKKAELESDLNNAADLLGDLEMAEEHPRARAMQKEQELAAQAALLRPAMTKDTPIEDHPLFKAETKKEYQDLRKALATAIVTMHEKSSLNYSSSLAIDLIRDVSKPMSIENIRQTVATLNILIKDKEKAERQARLARVKGGTATGGAGKKKAKAKTNLGGAFKKDQDFDVDDINYDDFGADDFM</sequence>
<comment type="function">
    <text evidence="1">Component of the eukaryotic translation initiation factor 3 (eIF-3) complex, which is involved in protein synthesis of a specialized repertoire of mRNAs and, together with other initiation factors, stimulates binding of mRNA and methionyl-tRNAi to the 40S ribosome. The eIF-3 complex specifically targets and initiates translation of a subset of mRNAs involved in cell proliferation.</text>
</comment>
<comment type="subunit">
    <text evidence="1">Component of the eukaryotic translation initiation factor 3 (eIF-3) complex.</text>
</comment>
<comment type="subcellular location">
    <subcellularLocation>
        <location evidence="1">Cytoplasm</location>
    </subcellularLocation>
</comment>
<comment type="similarity">
    <text evidence="1">Belongs to the eIF-3 subunit J family.</text>
</comment>
<reference key="1">
    <citation type="journal article" date="2004" name="Nature">
        <title>Genome evolution in yeasts.</title>
        <authorList>
            <person name="Dujon B."/>
            <person name="Sherman D."/>
            <person name="Fischer G."/>
            <person name="Durrens P."/>
            <person name="Casaregola S."/>
            <person name="Lafontaine I."/>
            <person name="de Montigny J."/>
            <person name="Marck C."/>
            <person name="Neuveglise C."/>
            <person name="Talla E."/>
            <person name="Goffard N."/>
            <person name="Frangeul L."/>
            <person name="Aigle M."/>
            <person name="Anthouard V."/>
            <person name="Babour A."/>
            <person name="Barbe V."/>
            <person name="Barnay S."/>
            <person name="Blanchin S."/>
            <person name="Beckerich J.-M."/>
            <person name="Beyne E."/>
            <person name="Bleykasten C."/>
            <person name="Boisrame A."/>
            <person name="Boyer J."/>
            <person name="Cattolico L."/>
            <person name="Confanioleri F."/>
            <person name="de Daruvar A."/>
            <person name="Despons L."/>
            <person name="Fabre E."/>
            <person name="Fairhead C."/>
            <person name="Ferry-Dumazet H."/>
            <person name="Groppi A."/>
            <person name="Hantraye F."/>
            <person name="Hennequin C."/>
            <person name="Jauniaux N."/>
            <person name="Joyet P."/>
            <person name="Kachouri R."/>
            <person name="Kerrest A."/>
            <person name="Koszul R."/>
            <person name="Lemaire M."/>
            <person name="Lesur I."/>
            <person name="Ma L."/>
            <person name="Muller H."/>
            <person name="Nicaud J.-M."/>
            <person name="Nikolski M."/>
            <person name="Oztas S."/>
            <person name="Ozier-Kalogeropoulos O."/>
            <person name="Pellenz S."/>
            <person name="Potier S."/>
            <person name="Richard G.-F."/>
            <person name="Straub M.-L."/>
            <person name="Suleau A."/>
            <person name="Swennen D."/>
            <person name="Tekaia F."/>
            <person name="Wesolowski-Louvel M."/>
            <person name="Westhof E."/>
            <person name="Wirth B."/>
            <person name="Zeniou-Meyer M."/>
            <person name="Zivanovic Y."/>
            <person name="Bolotin-Fukuhara M."/>
            <person name="Thierry A."/>
            <person name="Bouchier C."/>
            <person name="Caudron B."/>
            <person name="Scarpelli C."/>
            <person name="Gaillardin C."/>
            <person name="Weissenbach J."/>
            <person name="Wincker P."/>
            <person name="Souciet J.-L."/>
        </authorList>
    </citation>
    <scope>NUCLEOTIDE SEQUENCE [LARGE SCALE GENOMIC DNA]</scope>
    <source>
        <strain>ATCC 2001 / BCRC 20586 / JCM 3761 / NBRC 0622 / NRRL Y-65 / CBS 138</strain>
    </source>
</reference>
<protein>
    <recommendedName>
        <fullName evidence="1">Eukaryotic translation initiation factor 3 subunit J</fullName>
        <shortName evidence="1">eIF3j</shortName>
    </recommendedName>
    <alternativeName>
        <fullName>Eukaryotic translation initiation factor 3 30 kDa subunit</fullName>
        <shortName>eIF-3 30 kDa</shortName>
    </alternativeName>
</protein>
<evidence type="ECO:0000255" key="1">
    <source>
        <dbReference type="HAMAP-Rule" id="MF_03009"/>
    </source>
</evidence>
<evidence type="ECO:0000256" key="2">
    <source>
        <dbReference type="SAM" id="MobiDB-lite"/>
    </source>
</evidence>
<feature type="chain" id="PRO_0000365152" description="Eukaryotic translation initiation factor 3 subunit J">
    <location>
        <begin position="1"/>
        <end position="265"/>
    </location>
</feature>
<feature type="region of interest" description="Disordered" evidence="2">
    <location>
        <begin position="24"/>
        <end position="74"/>
    </location>
</feature>
<feature type="coiled-coil region" evidence="1">
    <location>
        <begin position="78"/>
        <end position="106"/>
    </location>
</feature>
<feature type="coiled-coil region" evidence="1">
    <location>
        <begin position="190"/>
        <end position="220"/>
    </location>
</feature>
<feature type="compositionally biased region" description="Acidic residues" evidence="2">
    <location>
        <begin position="24"/>
        <end position="34"/>
    </location>
</feature>
<feature type="compositionally biased region" description="Basic and acidic residues" evidence="2">
    <location>
        <begin position="35"/>
        <end position="45"/>
    </location>
</feature>
<feature type="compositionally biased region" description="Basic residues" evidence="2">
    <location>
        <begin position="46"/>
        <end position="57"/>
    </location>
</feature>
<name>EIF3J_CANGA</name>
<keyword id="KW-0175">Coiled coil</keyword>
<keyword id="KW-0963">Cytoplasm</keyword>
<keyword id="KW-0396">Initiation factor</keyword>
<keyword id="KW-0648">Protein biosynthesis</keyword>
<keyword id="KW-1185">Reference proteome</keyword>
<dbReference type="EMBL" id="CR380947">
    <property type="protein sequence ID" value="CAG57839.1"/>
    <property type="molecule type" value="Genomic_DNA"/>
</dbReference>
<dbReference type="RefSeq" id="XP_444946.1">
    <property type="nucleotide sequence ID" value="XM_444946.1"/>
</dbReference>
<dbReference type="SMR" id="Q6FY89"/>
<dbReference type="FunCoup" id="Q6FY89">
    <property type="interactions" value="130"/>
</dbReference>
<dbReference type="STRING" id="284593.Q6FY89"/>
<dbReference type="EnsemblFungi" id="CAGL0A04125g-T">
    <property type="protein sequence ID" value="CAGL0A04125g-T-p1"/>
    <property type="gene ID" value="CAGL0A04125g"/>
</dbReference>
<dbReference type="KEGG" id="cgr:2886445"/>
<dbReference type="CGD" id="CAL0126787">
    <property type="gene designation" value="CAGL0A04125g"/>
</dbReference>
<dbReference type="VEuPathDB" id="FungiDB:B1J91_A04125g"/>
<dbReference type="VEuPathDB" id="FungiDB:CAGL0A04125g"/>
<dbReference type="eggNOG" id="KOG4813">
    <property type="taxonomic scope" value="Eukaryota"/>
</dbReference>
<dbReference type="HOGENOM" id="CLU_085412_0_0_1"/>
<dbReference type="InParanoid" id="Q6FY89"/>
<dbReference type="OMA" id="MESWDAE"/>
<dbReference type="Proteomes" id="UP000002428">
    <property type="component" value="Chromosome A"/>
</dbReference>
<dbReference type="GO" id="GO:0016282">
    <property type="term" value="C:eukaryotic 43S preinitiation complex"/>
    <property type="evidence" value="ECO:0007669"/>
    <property type="project" value="UniProtKB-UniRule"/>
</dbReference>
<dbReference type="GO" id="GO:0033290">
    <property type="term" value="C:eukaryotic 48S preinitiation complex"/>
    <property type="evidence" value="ECO:0007669"/>
    <property type="project" value="UniProtKB-UniRule"/>
</dbReference>
<dbReference type="GO" id="GO:0005852">
    <property type="term" value="C:eukaryotic translation initiation factor 3 complex"/>
    <property type="evidence" value="ECO:0007669"/>
    <property type="project" value="UniProtKB-UniRule"/>
</dbReference>
<dbReference type="GO" id="GO:0003743">
    <property type="term" value="F:translation initiation factor activity"/>
    <property type="evidence" value="ECO:0007669"/>
    <property type="project" value="UniProtKB-UniRule"/>
</dbReference>
<dbReference type="GO" id="GO:0001732">
    <property type="term" value="P:formation of cytoplasmic translation initiation complex"/>
    <property type="evidence" value="ECO:0007669"/>
    <property type="project" value="UniProtKB-UniRule"/>
</dbReference>
<dbReference type="FunFam" id="1.10.246.60:FF:000004">
    <property type="entry name" value="Eukaryotic translation initiation factor 3 subunit J"/>
    <property type="match status" value="1"/>
</dbReference>
<dbReference type="Gene3D" id="1.10.246.60">
    <property type="entry name" value="Eukaryotic translation initiation factor 3 like domains"/>
    <property type="match status" value="1"/>
</dbReference>
<dbReference type="HAMAP" id="MF_03009">
    <property type="entry name" value="eIF3j"/>
    <property type="match status" value="1"/>
</dbReference>
<dbReference type="InterPro" id="IPR023194">
    <property type="entry name" value="eIF3-like_dom_sf"/>
</dbReference>
<dbReference type="InterPro" id="IPR013906">
    <property type="entry name" value="eIF3j"/>
</dbReference>
<dbReference type="PANTHER" id="PTHR21681">
    <property type="entry name" value="EUKARYOTIC TRANSLATION INITIATION FACTOR 3 SUBUNIT J"/>
    <property type="match status" value="1"/>
</dbReference>
<dbReference type="PANTHER" id="PTHR21681:SF0">
    <property type="entry name" value="EUKARYOTIC TRANSLATION INITIATION FACTOR 3 SUBUNIT J"/>
    <property type="match status" value="1"/>
</dbReference>
<dbReference type="Pfam" id="PF08597">
    <property type="entry name" value="eIF3_subunit"/>
    <property type="match status" value="1"/>
</dbReference>